<comment type="function">
    <text evidence="1">Catalyzes a salvage reaction resulting in the formation of AMP, that is energically less costly than de novo synthesis.</text>
</comment>
<comment type="catalytic activity">
    <reaction evidence="1">
        <text>AMP + diphosphate = 5-phospho-alpha-D-ribose 1-diphosphate + adenine</text>
        <dbReference type="Rhea" id="RHEA:16609"/>
        <dbReference type="ChEBI" id="CHEBI:16708"/>
        <dbReference type="ChEBI" id="CHEBI:33019"/>
        <dbReference type="ChEBI" id="CHEBI:58017"/>
        <dbReference type="ChEBI" id="CHEBI:456215"/>
        <dbReference type="EC" id="2.4.2.7"/>
    </reaction>
</comment>
<comment type="pathway">
    <text evidence="1">Purine metabolism; AMP biosynthesis via salvage pathway; AMP from adenine: step 1/1.</text>
</comment>
<comment type="subunit">
    <text evidence="1">Homodimer.</text>
</comment>
<comment type="subcellular location">
    <subcellularLocation>
        <location evidence="1">Cytoplasm</location>
    </subcellularLocation>
</comment>
<comment type="similarity">
    <text evidence="1">Belongs to the purine/pyrimidine phosphoribosyltransferase family.</text>
</comment>
<keyword id="KW-0963">Cytoplasm</keyword>
<keyword id="KW-0328">Glycosyltransferase</keyword>
<keyword id="KW-0660">Purine salvage</keyword>
<keyword id="KW-0808">Transferase</keyword>
<sequence>MNETLKEELLQSIREVKDYPKKGILFKDITTLLNYPKLFNKLIDALKKRYLALNIDFIVGIEARGFILGSALAYALGVGFVPVRKKGKLPAHTLSQSYSLEYGSDSIEIHSDAFRGVKGVRVVLIDDLLATGGTALASLELIKALQAECIEACFLIGLKELPGIQLLEERVKTFCLLEC</sequence>
<name>APT_HELPS</name>
<protein>
    <recommendedName>
        <fullName evidence="1">Adenine phosphoribosyltransferase</fullName>
        <shortName evidence="1">APRT</shortName>
        <ecNumber evidence="1">2.4.2.7</ecNumber>
    </recommendedName>
</protein>
<accession>B2UTQ6</accession>
<evidence type="ECO:0000255" key="1">
    <source>
        <dbReference type="HAMAP-Rule" id="MF_00004"/>
    </source>
</evidence>
<dbReference type="EC" id="2.4.2.7" evidence="1"/>
<dbReference type="EMBL" id="CP001072">
    <property type="protein sequence ID" value="ACD48238.1"/>
    <property type="molecule type" value="Genomic_DNA"/>
</dbReference>
<dbReference type="RefSeq" id="WP_001006117.1">
    <property type="nucleotide sequence ID" value="NC_010698.2"/>
</dbReference>
<dbReference type="SMR" id="B2UTQ6"/>
<dbReference type="KEGG" id="hps:HPSH_04015"/>
<dbReference type="HOGENOM" id="CLU_063339_3_0_7"/>
<dbReference type="UniPathway" id="UPA00588">
    <property type="reaction ID" value="UER00646"/>
</dbReference>
<dbReference type="GO" id="GO:0005737">
    <property type="term" value="C:cytoplasm"/>
    <property type="evidence" value="ECO:0007669"/>
    <property type="project" value="UniProtKB-SubCell"/>
</dbReference>
<dbReference type="GO" id="GO:0002055">
    <property type="term" value="F:adenine binding"/>
    <property type="evidence" value="ECO:0007669"/>
    <property type="project" value="TreeGrafter"/>
</dbReference>
<dbReference type="GO" id="GO:0003999">
    <property type="term" value="F:adenine phosphoribosyltransferase activity"/>
    <property type="evidence" value="ECO:0007669"/>
    <property type="project" value="UniProtKB-UniRule"/>
</dbReference>
<dbReference type="GO" id="GO:0016208">
    <property type="term" value="F:AMP binding"/>
    <property type="evidence" value="ECO:0007669"/>
    <property type="project" value="TreeGrafter"/>
</dbReference>
<dbReference type="GO" id="GO:0006168">
    <property type="term" value="P:adenine salvage"/>
    <property type="evidence" value="ECO:0007669"/>
    <property type="project" value="InterPro"/>
</dbReference>
<dbReference type="GO" id="GO:0044209">
    <property type="term" value="P:AMP salvage"/>
    <property type="evidence" value="ECO:0007669"/>
    <property type="project" value="UniProtKB-UniRule"/>
</dbReference>
<dbReference type="GO" id="GO:0006166">
    <property type="term" value="P:purine ribonucleoside salvage"/>
    <property type="evidence" value="ECO:0007669"/>
    <property type="project" value="UniProtKB-KW"/>
</dbReference>
<dbReference type="CDD" id="cd06223">
    <property type="entry name" value="PRTases_typeI"/>
    <property type="match status" value="1"/>
</dbReference>
<dbReference type="FunFam" id="3.40.50.2020:FF:000021">
    <property type="entry name" value="Adenine phosphoribosyltransferase"/>
    <property type="match status" value="1"/>
</dbReference>
<dbReference type="Gene3D" id="3.40.50.2020">
    <property type="match status" value="1"/>
</dbReference>
<dbReference type="HAMAP" id="MF_00004">
    <property type="entry name" value="Aden_phosphoribosyltr"/>
    <property type="match status" value="1"/>
</dbReference>
<dbReference type="InterPro" id="IPR005764">
    <property type="entry name" value="Ade_phspho_trans"/>
</dbReference>
<dbReference type="InterPro" id="IPR000836">
    <property type="entry name" value="PRibTrfase_dom"/>
</dbReference>
<dbReference type="InterPro" id="IPR029057">
    <property type="entry name" value="PRTase-like"/>
</dbReference>
<dbReference type="InterPro" id="IPR050054">
    <property type="entry name" value="UPRTase/APRTase"/>
</dbReference>
<dbReference type="NCBIfam" id="TIGR01090">
    <property type="entry name" value="apt"/>
    <property type="match status" value="1"/>
</dbReference>
<dbReference type="NCBIfam" id="NF002634">
    <property type="entry name" value="PRK02304.1-3"/>
    <property type="match status" value="1"/>
</dbReference>
<dbReference type="NCBIfam" id="NF002636">
    <property type="entry name" value="PRK02304.1-5"/>
    <property type="match status" value="1"/>
</dbReference>
<dbReference type="PANTHER" id="PTHR32315">
    <property type="entry name" value="ADENINE PHOSPHORIBOSYLTRANSFERASE"/>
    <property type="match status" value="1"/>
</dbReference>
<dbReference type="PANTHER" id="PTHR32315:SF3">
    <property type="entry name" value="ADENINE PHOSPHORIBOSYLTRANSFERASE"/>
    <property type="match status" value="1"/>
</dbReference>
<dbReference type="Pfam" id="PF00156">
    <property type="entry name" value="Pribosyltran"/>
    <property type="match status" value="1"/>
</dbReference>
<dbReference type="SUPFAM" id="SSF53271">
    <property type="entry name" value="PRTase-like"/>
    <property type="match status" value="1"/>
</dbReference>
<dbReference type="PROSITE" id="PS00103">
    <property type="entry name" value="PUR_PYR_PR_TRANSFER"/>
    <property type="match status" value="1"/>
</dbReference>
<organism>
    <name type="scientific">Helicobacter pylori (strain Shi470)</name>
    <dbReference type="NCBI Taxonomy" id="512562"/>
    <lineage>
        <taxon>Bacteria</taxon>
        <taxon>Pseudomonadati</taxon>
        <taxon>Campylobacterota</taxon>
        <taxon>Epsilonproteobacteria</taxon>
        <taxon>Campylobacterales</taxon>
        <taxon>Helicobacteraceae</taxon>
        <taxon>Helicobacter</taxon>
    </lineage>
</organism>
<reference key="1">
    <citation type="submission" date="2008-05" db="EMBL/GenBank/DDBJ databases">
        <title>Genome sequence of Helicobacter pylori from the remote Amazon: traces of Asian ancestry of the first Americans.</title>
        <authorList>
            <person name="Kersulyte D."/>
            <person name="Kalia A."/>
            <person name="Gilman R.H."/>
            <person name="Berg D.E."/>
        </authorList>
    </citation>
    <scope>NUCLEOTIDE SEQUENCE [LARGE SCALE GENOMIC DNA]</scope>
    <source>
        <strain>Shi470</strain>
    </source>
</reference>
<gene>
    <name evidence="1" type="primary">apt</name>
    <name type="ordered locus">HPSH_04015</name>
</gene>
<feature type="chain" id="PRO_1000088980" description="Adenine phosphoribosyltransferase">
    <location>
        <begin position="1"/>
        <end position="179"/>
    </location>
</feature>
<proteinExistence type="inferred from homology"/>